<organism>
    <name type="scientific">Escherichia coli (strain K12)</name>
    <dbReference type="NCBI Taxonomy" id="83333"/>
    <lineage>
        <taxon>Bacteria</taxon>
        <taxon>Pseudomonadati</taxon>
        <taxon>Pseudomonadota</taxon>
        <taxon>Gammaproteobacteria</taxon>
        <taxon>Enterobacterales</taxon>
        <taxon>Enterobacteriaceae</taxon>
        <taxon>Escherichia</taxon>
    </lineage>
</organism>
<accession>P39347</accession>
<accession>Q2M639</accession>
<protein>
    <recommendedName>
        <fullName evidence="3">Putative protein IntB</fullName>
    </recommendedName>
    <alternativeName>
        <fullName>Int(P4)</fullName>
    </alternativeName>
    <alternativeName>
        <fullName>Putative prophage P4 integrase</fullName>
    </alternativeName>
</protein>
<gene>
    <name type="primary">intB</name>
    <name type="ordered locus">b4271</name>
    <name type="ordered locus">JW4227</name>
</gene>
<comment type="similarity">
    <text evidence="3">Belongs to the 'phage' integrase family.</text>
</comment>
<comment type="caution">
    <text evidence="3">Additional homology to the integrase family exists upstream of the current start codon.</text>
</comment>
<comment type="caution">
    <text evidence="3">Could be the product of a pseudogene.</text>
</comment>
<keyword id="KW-0229">DNA integration</keyword>
<keyword id="KW-0233">DNA recombination</keyword>
<keyword id="KW-0238">DNA-binding</keyword>
<keyword id="KW-1185">Reference proteome</keyword>
<keyword id="KW-1179">Viral genome integration</keyword>
<keyword id="KW-1160">Virus entry into host cell</keyword>
<dbReference type="EMBL" id="U14003">
    <property type="protein sequence ID" value="AAA97167.1"/>
    <property type="molecule type" value="Genomic_DNA"/>
</dbReference>
<dbReference type="EMBL" id="U00096">
    <property type="status" value="NOT_ANNOTATED_CDS"/>
    <property type="molecule type" value="Genomic_DNA"/>
</dbReference>
<dbReference type="EMBL" id="AP009048">
    <property type="protein sequence ID" value="BAE78267.1"/>
    <property type="molecule type" value="Genomic_DNA"/>
</dbReference>
<dbReference type="EMBL" id="M96355">
    <property type="status" value="NOT_ANNOTATED_CDS"/>
    <property type="molecule type" value="Genomic_DNA"/>
</dbReference>
<dbReference type="PIR" id="S56496">
    <property type="entry name" value="S56496"/>
</dbReference>
<dbReference type="SMR" id="P39347"/>
<dbReference type="BioGRID" id="4262732">
    <property type="interactions" value="30"/>
</dbReference>
<dbReference type="DIP" id="DIP-10035N"/>
<dbReference type="FunCoup" id="P39347">
    <property type="interactions" value="73"/>
</dbReference>
<dbReference type="IntAct" id="P39347">
    <property type="interactions" value="15"/>
</dbReference>
<dbReference type="KEGG" id="ecj:JW4227"/>
<dbReference type="KEGG" id="ecoc:C3026_23035"/>
<dbReference type="PATRIC" id="fig|83333.103.peg.579"/>
<dbReference type="EchoBASE" id="EB2267"/>
<dbReference type="eggNOG" id="COG0582">
    <property type="taxonomic scope" value="Bacteria"/>
</dbReference>
<dbReference type="HOGENOM" id="CLU_027562_0_1_6"/>
<dbReference type="InParanoid" id="P39347"/>
<dbReference type="OMA" id="DWHTACK"/>
<dbReference type="PhylomeDB" id="P39347"/>
<dbReference type="Proteomes" id="UP000000625">
    <property type="component" value="Chromosome"/>
</dbReference>
<dbReference type="GO" id="GO:0005829">
    <property type="term" value="C:cytosol"/>
    <property type="evidence" value="ECO:0000314"/>
    <property type="project" value="EcoCyc"/>
</dbReference>
<dbReference type="GO" id="GO:0003677">
    <property type="term" value="F:DNA binding"/>
    <property type="evidence" value="ECO:0007669"/>
    <property type="project" value="UniProtKB-KW"/>
</dbReference>
<dbReference type="GO" id="GO:0008979">
    <property type="term" value="F:prophage integrase activity"/>
    <property type="evidence" value="ECO:0000318"/>
    <property type="project" value="GO_Central"/>
</dbReference>
<dbReference type="GO" id="GO:0006310">
    <property type="term" value="P:DNA recombination"/>
    <property type="evidence" value="ECO:0007669"/>
    <property type="project" value="UniProtKB-KW"/>
</dbReference>
<dbReference type="GO" id="GO:0032359">
    <property type="term" value="P:provirus excision"/>
    <property type="evidence" value="ECO:0000318"/>
    <property type="project" value="GO_Central"/>
</dbReference>
<dbReference type="GO" id="GO:0046718">
    <property type="term" value="P:symbiont entry into host cell"/>
    <property type="evidence" value="ECO:0007669"/>
    <property type="project" value="UniProtKB-KW"/>
</dbReference>
<dbReference type="GO" id="GO:0044826">
    <property type="term" value="P:viral genome integration into host DNA"/>
    <property type="evidence" value="ECO:0007669"/>
    <property type="project" value="UniProtKB-KW"/>
</dbReference>
<dbReference type="CDD" id="cd00801">
    <property type="entry name" value="INT_P4_C"/>
    <property type="match status" value="1"/>
</dbReference>
<dbReference type="FunFam" id="1.10.150.130:FF:000013">
    <property type="entry name" value="Putative integrase KpLE2 phage-like element"/>
    <property type="match status" value="1"/>
</dbReference>
<dbReference type="FunFam" id="3.30.160.390:FF:000002">
    <property type="entry name" value="Site-specific recombinase, phage integrase family"/>
    <property type="match status" value="1"/>
</dbReference>
<dbReference type="Gene3D" id="1.10.150.130">
    <property type="match status" value="1"/>
</dbReference>
<dbReference type="Gene3D" id="3.30.160.390">
    <property type="entry name" value="Integrase, DNA-binding domain"/>
    <property type="match status" value="1"/>
</dbReference>
<dbReference type="Gene3D" id="1.10.443.10">
    <property type="entry name" value="Intergrase catalytic core"/>
    <property type="match status" value="1"/>
</dbReference>
<dbReference type="InterPro" id="IPR044068">
    <property type="entry name" value="CB"/>
</dbReference>
<dbReference type="InterPro" id="IPR011010">
    <property type="entry name" value="DNA_brk_join_enz"/>
</dbReference>
<dbReference type="InterPro" id="IPR013762">
    <property type="entry name" value="Integrase-like_cat_sf"/>
</dbReference>
<dbReference type="InterPro" id="IPR002104">
    <property type="entry name" value="Integrase_catalytic"/>
</dbReference>
<dbReference type="InterPro" id="IPR038488">
    <property type="entry name" value="Integrase_DNA-bd_sf"/>
</dbReference>
<dbReference type="InterPro" id="IPR025166">
    <property type="entry name" value="Integrase_DNA_bind_dom"/>
</dbReference>
<dbReference type="InterPro" id="IPR010998">
    <property type="entry name" value="Integrase_recombinase_N"/>
</dbReference>
<dbReference type="InterPro" id="IPR053876">
    <property type="entry name" value="Phage_int_M"/>
</dbReference>
<dbReference type="InterPro" id="IPR050808">
    <property type="entry name" value="Phage_Integrase"/>
</dbReference>
<dbReference type="PANTHER" id="PTHR30629">
    <property type="entry name" value="PROPHAGE INTEGRASE"/>
    <property type="match status" value="1"/>
</dbReference>
<dbReference type="PANTHER" id="PTHR30629:SF9">
    <property type="entry name" value="PROTEIN INTB-RELATED"/>
    <property type="match status" value="1"/>
</dbReference>
<dbReference type="Pfam" id="PF13356">
    <property type="entry name" value="Arm-DNA-bind_3"/>
    <property type="match status" value="1"/>
</dbReference>
<dbReference type="Pfam" id="PF22022">
    <property type="entry name" value="Phage_int_M"/>
    <property type="match status" value="1"/>
</dbReference>
<dbReference type="Pfam" id="PF00589">
    <property type="entry name" value="Phage_integrase"/>
    <property type="match status" value="1"/>
</dbReference>
<dbReference type="SUPFAM" id="SSF56349">
    <property type="entry name" value="DNA breaking-rejoining enzymes"/>
    <property type="match status" value="1"/>
</dbReference>
<dbReference type="PROSITE" id="PS51900">
    <property type="entry name" value="CB"/>
    <property type="match status" value="1"/>
</dbReference>
<dbReference type="PROSITE" id="PS51898">
    <property type="entry name" value="TYR_RECOMBINASE"/>
    <property type="match status" value="1"/>
</dbReference>
<name>INTB_ECOLI</name>
<reference key="1">
    <citation type="journal article" date="1995" name="Nucleic Acids Res.">
        <title>Analysis of the Escherichia coli genome VI: DNA sequence of the region from 92.8 through 100 minutes.</title>
        <authorList>
            <person name="Burland V.D."/>
            <person name="Plunkett G. III"/>
            <person name="Sofia H.J."/>
            <person name="Daniels D.L."/>
            <person name="Blattner F.R."/>
        </authorList>
    </citation>
    <scope>NUCLEOTIDE SEQUENCE [LARGE SCALE GENOMIC DNA]</scope>
    <source>
        <strain>K12 / MG1655 / ATCC 47076</strain>
    </source>
</reference>
<reference key="2">
    <citation type="journal article" date="1997" name="Science">
        <title>The complete genome sequence of Escherichia coli K-12.</title>
        <authorList>
            <person name="Blattner F.R."/>
            <person name="Plunkett G. III"/>
            <person name="Bloch C.A."/>
            <person name="Perna N.T."/>
            <person name="Burland V."/>
            <person name="Riley M."/>
            <person name="Collado-Vides J."/>
            <person name="Glasner J.D."/>
            <person name="Rode C.K."/>
            <person name="Mayhew G.F."/>
            <person name="Gregor J."/>
            <person name="Davis N.W."/>
            <person name="Kirkpatrick H.A."/>
            <person name="Goeden M.A."/>
            <person name="Rose D.J."/>
            <person name="Mau B."/>
            <person name="Shao Y."/>
        </authorList>
    </citation>
    <scope>NUCLEOTIDE SEQUENCE [LARGE SCALE GENOMIC DNA]</scope>
    <source>
        <strain>K12 / MG1655 / ATCC 47076</strain>
    </source>
</reference>
<reference key="3">
    <citation type="journal article" date="2006" name="Mol. Syst. Biol.">
        <title>Highly accurate genome sequences of Escherichia coli K-12 strains MG1655 and W3110.</title>
        <authorList>
            <person name="Hayashi K."/>
            <person name="Morooka N."/>
            <person name="Yamamoto Y."/>
            <person name="Fujita K."/>
            <person name="Isono K."/>
            <person name="Choi S."/>
            <person name="Ohtsubo E."/>
            <person name="Baba T."/>
            <person name="Wanner B.L."/>
            <person name="Mori H."/>
            <person name="Horiuchi T."/>
        </authorList>
    </citation>
    <scope>NUCLEOTIDE SEQUENCE [LARGE SCALE GENOMIC DNA]</scope>
    <source>
        <strain>K12 / W3110 / ATCC 27325 / DSM 5911</strain>
    </source>
</reference>
<reference key="4">
    <citation type="submission" date="1992-09" db="EMBL/GenBank/DDBJ databases">
        <authorList>
            <person name="Pucci M.J."/>
            <person name="Discotto L.F."/>
            <person name="Dougherty T.J."/>
        </authorList>
    </citation>
    <scope>PRELIMINARY NUCLEOTIDE SEQUENCE [GENOMIC DNA] OF 1-115</scope>
    <source>
        <strain>B</strain>
    </source>
</reference>
<feature type="chain" id="PRO_0000197512" description="Putative protein IntB">
    <location>
        <begin position="1"/>
        <end position="396"/>
    </location>
</feature>
<feature type="domain" description="Core-binding (CB)" evidence="2">
    <location>
        <begin position="71"/>
        <end position="151"/>
    </location>
</feature>
<feature type="domain" description="Tyr recombinase" evidence="1">
    <location>
        <begin position="174"/>
        <end position="367"/>
    </location>
</feature>
<feature type="active site" evidence="1">
    <location>
        <position position="213"/>
    </location>
</feature>
<feature type="active site" evidence="1">
    <location>
        <position position="252"/>
    </location>
</feature>
<feature type="active site" evidence="1">
    <location>
        <position position="316"/>
    </location>
</feature>
<feature type="active site" evidence="1">
    <location>
        <position position="319"/>
    </location>
</feature>
<feature type="active site" evidence="1">
    <location>
        <position position="343"/>
    </location>
</feature>
<feature type="active site" description="O-(3'-phospho-DNA)-tyrosine intermediate" evidence="1">
    <location>
        <position position="353"/>
    </location>
</feature>
<evidence type="ECO:0000255" key="1">
    <source>
        <dbReference type="PROSITE-ProRule" id="PRU01246"/>
    </source>
</evidence>
<evidence type="ECO:0000255" key="2">
    <source>
        <dbReference type="PROSITE-ProRule" id="PRU01248"/>
    </source>
</evidence>
<evidence type="ECO:0000305" key="3"/>
<proteinExistence type="uncertain"/>
<sequence length="396" mass="45582">MHLLVHPNGSKYWRLQYRYEGKQKMLALGVYPEITLADARVRRDEARKLLANGVDPGDKKKNDKVEQSKARTFKEVAIEWHGTNKKWSEDHAHRVLKSLEDNLFAALGERNIAELKTRDLLAPIKAVEMSGRLEVAARLQQRTTAIMRYAVQSGLIDYNPAQEMAGAVASCNRQHRPALELKRIPELLTKIDSYTGRPLTRWAIELTLLIFIRSSELRFARWSEIDFEASIWTIPPEREPIPGVKHSHRGSKMRTTHLVPLSTQALAILKQIKQFYGAHDLIFIGDHDSHKPMSENTVNSALRVMGYDTKVEVCGHGFRTMACSSLVESGLWSRDAVERQMSHMARNSVRAAYIHKAEHLEERRLMLQWWADFLDVNRERFISPFEYAKINNPLKQ</sequence>